<protein>
    <recommendedName>
        <fullName>Transforming growth factor beta-1-induced transcript 1 protein</fullName>
    </recommendedName>
    <alternativeName>
        <fullName>Hydrogen peroxide-inducible clone 5 protein</fullName>
        <shortName>Hic-5</shortName>
    </alternativeName>
</protein>
<sequence length="456" mass="49452">MEDLDALLSDLETTTSHMPRSGALKERPPEPLTSPLTQMGPGESSGASGDKDHLYSTVCKPRSPKPAAPATPPFSSSCGVLGTGLCELDRLLQELNATQFNITDEIMSQFPSSKETAGEQKEDQSEDKKRPSPPPSPSPVLPKPSATSATLELDRLMASLSDFRVQNHLPASGPTPPPVPSSMSEDTPSPPGPTSKGSLDTMLGLLQSDLSRRGVPTQAKGLCGSCNKPIAGQVVTALGRAWHPEHFVCGGCSTALGGSSFFEKDGAPFCPECYFERFSPRCGLCNQPIRHKMVTALGTHWHPEHFCCVSCGEPFGDEGFHEREGRPYCRRDFLQLFAPRCQGCQGPILDNYISALSALWHPDCFVCRECFAPFSGGSFFEHEGRPLCENHFHARRGSLCATCGLPVTGRCVSALGRRFHPDHFTCTFCLRPLTKGSFQERAGKPYCQPCFLKLFG</sequence>
<accession>Q3MHZ4</accession>
<keyword id="KW-0007">Acetylation</keyword>
<keyword id="KW-0010">Activator</keyword>
<keyword id="KW-0965">Cell junction</keyword>
<keyword id="KW-0963">Cytoplasm</keyword>
<keyword id="KW-0206">Cytoskeleton</keyword>
<keyword id="KW-0221">Differentiation</keyword>
<keyword id="KW-0440">LIM domain</keyword>
<keyword id="KW-0479">Metal-binding</keyword>
<keyword id="KW-0539">Nucleus</keyword>
<keyword id="KW-0597">Phosphoprotein</keyword>
<keyword id="KW-1185">Reference proteome</keyword>
<keyword id="KW-0677">Repeat</keyword>
<keyword id="KW-0879">Wnt signaling pathway</keyword>
<keyword id="KW-0862">Zinc</keyword>
<evidence type="ECO:0000250" key="1"/>
<evidence type="ECO:0000250" key="2">
    <source>
        <dbReference type="UniProtKB" id="O43294"/>
    </source>
</evidence>
<evidence type="ECO:0000250" key="3">
    <source>
        <dbReference type="UniProtKB" id="Q62219"/>
    </source>
</evidence>
<evidence type="ECO:0000255" key="4">
    <source>
        <dbReference type="PROSITE-ProRule" id="PRU00125"/>
    </source>
</evidence>
<evidence type="ECO:0000256" key="5">
    <source>
        <dbReference type="SAM" id="MobiDB-lite"/>
    </source>
</evidence>
<evidence type="ECO:0000269" key="6">
    <source>
    </source>
</evidence>
<evidence type="ECO:0000305" key="7"/>
<proteinExistence type="evidence at transcript level"/>
<feature type="chain" id="PRO_0000291581" description="Transforming growth factor beta-1-induced transcript 1 protein">
    <location>
        <begin position="1"/>
        <end position="456"/>
    </location>
</feature>
<feature type="domain" description="LIM zinc-binding 1" evidence="4">
    <location>
        <begin position="221"/>
        <end position="280"/>
    </location>
</feature>
<feature type="domain" description="LIM zinc-binding 2" evidence="4">
    <location>
        <begin position="281"/>
        <end position="338"/>
    </location>
</feature>
<feature type="domain" description="LIM zinc-binding 3" evidence="4">
    <location>
        <begin position="339"/>
        <end position="398"/>
    </location>
</feature>
<feature type="domain" description="LIM zinc-binding 4" evidence="4">
    <location>
        <begin position="399"/>
        <end position="456"/>
    </location>
</feature>
<feature type="region of interest" description="Interaction with PTK2B/PYK2" evidence="1">
    <location>
        <begin position="1"/>
        <end position="235"/>
    </location>
</feature>
<feature type="region of interest" description="Transcription activation" evidence="1">
    <location>
        <begin position="1"/>
        <end position="195"/>
    </location>
</feature>
<feature type="region of interest" description="Disordered" evidence="5">
    <location>
        <begin position="1"/>
        <end position="79"/>
    </location>
</feature>
<feature type="region of interest" description="Interaction with PTK2/FAK1" evidence="1">
    <location>
        <begin position="78"/>
        <end position="131"/>
    </location>
</feature>
<feature type="region of interest" description="Disordered" evidence="5">
    <location>
        <begin position="109"/>
        <end position="146"/>
    </location>
</feature>
<feature type="region of interest" description="Disordered" evidence="5">
    <location>
        <begin position="166"/>
        <end position="200"/>
    </location>
</feature>
<feature type="short sequence motif" description="LD motif 1">
    <location>
        <begin position="3"/>
        <end position="15"/>
    </location>
</feature>
<feature type="short sequence motif" description="LD motif 2">
    <location>
        <begin position="87"/>
        <end position="99"/>
    </location>
</feature>
<feature type="short sequence motif" description="LD motif 3">
    <location>
        <begin position="152"/>
        <end position="163"/>
    </location>
</feature>
<feature type="short sequence motif" description="LD motif 4">
    <location>
        <begin position="198"/>
        <end position="210"/>
    </location>
</feature>
<feature type="compositionally biased region" description="Basic and acidic residues" evidence="5">
    <location>
        <begin position="116"/>
        <end position="130"/>
    </location>
</feature>
<feature type="compositionally biased region" description="Pro residues" evidence="5">
    <location>
        <begin position="132"/>
        <end position="142"/>
    </location>
</feature>
<feature type="modified residue" description="N-acetylmethionine" evidence="2">
    <location>
        <position position="1"/>
    </location>
</feature>
<feature type="modified residue" description="Phosphothreonine" evidence="2">
    <location>
        <position position="33"/>
    </location>
</feature>
<feature type="modified residue" description="Phosphotyrosine" evidence="2">
    <location>
        <position position="55"/>
    </location>
</feature>
<feature type="modified residue" description="Phosphoserine" evidence="2">
    <location>
        <position position="63"/>
    </location>
</feature>
<feature type="modified residue" description="Phosphoserine" evidence="2">
    <location>
        <position position="132"/>
    </location>
</feature>
<feature type="modified residue" description="Phosphoserine" evidence="2">
    <location>
        <position position="136"/>
    </location>
</feature>
<feature type="modified residue" description="Phosphoserine" evidence="2">
    <location>
        <position position="138"/>
    </location>
</feature>
<feature type="modified residue" description="Phosphoserine" evidence="2">
    <location>
        <position position="159"/>
    </location>
</feature>
<feature type="modified residue" description="Phosphoserine" evidence="3">
    <location>
        <position position="181"/>
    </location>
</feature>
<feature type="modified residue" description="Phosphoserine" evidence="2">
    <location>
        <position position="189"/>
    </location>
</feature>
<feature type="modified residue" description="Phosphoserine" evidence="2">
    <location>
        <position position="398"/>
    </location>
</feature>
<feature type="modified residue" description="Phosphothreonine" evidence="2">
    <location>
        <position position="402"/>
    </location>
</feature>
<comment type="function">
    <text evidence="6">Functions as a molecular adapter coordinating multiple protein-protein interactions at the focal adhesion complex and in the nucleus. Links various intracellular signaling modules to plasma membrane receptors and regulates the Wnt and TGFB signaling pathways. May also regulate SLC6A3 and SLC6A4 targeting to the plasma membrane hence regulating their activity. In the nucleus, functions as a nuclear receptor coactivator regulating glucocorticoid, androgen, mineralocorticoid and progesterone receptor transcriptional activity. May play a role in the processes of cell growth, proliferation, migration, differentiation and senescence. May have a zinc-dependent DNA-binding activity.</text>
</comment>
<comment type="subunit">
    <text evidence="1">Homooligomer. Interacts with CRIP2, HSPB1, ILK, LIMS1, LIMS2, NCK2, NUDT16L1, PAK, PPARG, PTPN12, TCF3, TCF7L2 and VCL. Forms a complex with GIT1 and ARHGEF7. Interacts with AR/androgen receptor in a ligand-dependent manner. Interacts with CSK, LYN, MAPK15, NR3C1, PPARG, PTK2/FAK1, PTK2B/PYK2, SLC6A3, SLC6A4, SMAD3, SRC and talin. Interacts (via LIM zinc-binding domain 2) with CBLC (via RING-type zinc finger); the interaction is direct and enhances CBLC E3 ubiquitin-protein ligase activity (By similarity).</text>
</comment>
<comment type="subcellular location">
    <subcellularLocation>
        <location>Cell junction</location>
        <location>Focal adhesion</location>
    </subcellularLocation>
    <subcellularLocation>
        <location>Nucleus matrix</location>
    </subcellularLocation>
    <subcellularLocation>
        <location evidence="1">Cytoplasm</location>
        <location evidence="1">Cytoskeleton</location>
    </subcellularLocation>
    <text evidence="1">Associated with the actin cytoskeleton, colocalizes with stress fibers.</text>
</comment>
<comment type="domain">
    <text evidence="1">The LIM zinc-binding domains mediate glucocorticoid receptor coactivation and interaction with AR, CRIP2, ILK, LIMS1, NR3C1, PPARG, TCF3, TCF7L2, SLC6A3 and SMAD3. The LIM zinc-binding 2 and LIM zinc-binding 3 domains mediate targeting to focal adhesions and actin stress fibers. The LIM zinc-binding 3 and LIM zinc-binding 4 domains mediate interaction with TRAF4 and MAPK15. The LIM zinc-binding 4 domain mediates interaction with HSPB1, homooligomerization and targeting to the nuclear matrix. The LIM zinc-binding 3 domain mediates interaction with PTPN12 (By similarity).</text>
</comment>
<comment type="domain">
    <text evidence="1">The LD (leucine and aspartate-rich) motif 3 mediates interaction with GIT1 and functions as a nuclear export signal.</text>
</comment>
<comment type="PTM">
    <text evidence="1">Phosphorylated by gonadotropin-releasing hormone-activated SRC.</text>
</comment>
<comment type="similarity">
    <text evidence="7">Belongs to the paxillin family.</text>
</comment>
<comment type="sequence caution" evidence="7">
    <conflict type="erroneous initiation">
        <sequence resource="EMBL-CDS" id="AAI04511"/>
    </conflict>
    <text>Truncated N-terminus.</text>
</comment>
<name>TGFI1_BOVIN</name>
<gene>
    <name type="primary">TGFB1I1</name>
</gene>
<dbReference type="EMBL" id="DV813479">
    <property type="status" value="NOT_ANNOTATED_CDS"/>
    <property type="molecule type" value="mRNA"/>
</dbReference>
<dbReference type="EMBL" id="BC104510">
    <property type="protein sequence ID" value="AAI04511.1"/>
    <property type="status" value="ALT_INIT"/>
    <property type="molecule type" value="mRNA"/>
</dbReference>
<dbReference type="RefSeq" id="NP_001030390.1">
    <property type="nucleotide sequence ID" value="NM_001035313.1"/>
</dbReference>
<dbReference type="RefSeq" id="XP_005224965.1">
    <property type="nucleotide sequence ID" value="XM_005224908.4"/>
</dbReference>
<dbReference type="RefSeq" id="XP_005224966.1">
    <property type="nucleotide sequence ID" value="XM_005224909.3"/>
</dbReference>
<dbReference type="SMR" id="Q3MHZ4"/>
<dbReference type="FunCoup" id="Q3MHZ4">
    <property type="interactions" value="291"/>
</dbReference>
<dbReference type="STRING" id="9913.ENSBTAP00000003094"/>
<dbReference type="PaxDb" id="9913-ENSBTAP00000003094"/>
<dbReference type="GeneID" id="515834"/>
<dbReference type="KEGG" id="bta:515834"/>
<dbReference type="CTD" id="7041"/>
<dbReference type="VEuPathDB" id="HostDB:ENSBTAG00000002391"/>
<dbReference type="eggNOG" id="KOG1703">
    <property type="taxonomic scope" value="Eukaryota"/>
</dbReference>
<dbReference type="HOGENOM" id="CLU_001357_1_2_1"/>
<dbReference type="InParanoid" id="Q3MHZ4"/>
<dbReference type="OMA" id="YCPECYF"/>
<dbReference type="OrthoDB" id="15567at2759"/>
<dbReference type="TreeFam" id="TF314113"/>
<dbReference type="Proteomes" id="UP000009136">
    <property type="component" value="Chromosome 25"/>
</dbReference>
<dbReference type="Bgee" id="ENSBTAG00000002391">
    <property type="expression patterns" value="Expressed in vas deferens and 103 other cell types or tissues"/>
</dbReference>
<dbReference type="GO" id="GO:0005856">
    <property type="term" value="C:cytoskeleton"/>
    <property type="evidence" value="ECO:0007669"/>
    <property type="project" value="UniProtKB-SubCell"/>
</dbReference>
<dbReference type="GO" id="GO:0005829">
    <property type="term" value="C:cytosol"/>
    <property type="evidence" value="ECO:0007669"/>
    <property type="project" value="Ensembl"/>
</dbReference>
<dbReference type="GO" id="GO:0005925">
    <property type="term" value="C:focal adhesion"/>
    <property type="evidence" value="ECO:0007669"/>
    <property type="project" value="UniProtKB-SubCell"/>
</dbReference>
<dbReference type="GO" id="GO:0016363">
    <property type="term" value="C:nuclear matrix"/>
    <property type="evidence" value="ECO:0007669"/>
    <property type="project" value="UniProtKB-SubCell"/>
</dbReference>
<dbReference type="GO" id="GO:0070411">
    <property type="term" value="F:I-SMAD binding"/>
    <property type="evidence" value="ECO:0007669"/>
    <property type="project" value="Ensembl"/>
</dbReference>
<dbReference type="GO" id="GO:0046872">
    <property type="term" value="F:metal ion binding"/>
    <property type="evidence" value="ECO:0007669"/>
    <property type="project" value="UniProtKB-KW"/>
</dbReference>
<dbReference type="GO" id="GO:0050681">
    <property type="term" value="F:nuclear androgen receptor binding"/>
    <property type="evidence" value="ECO:0007669"/>
    <property type="project" value="Ensembl"/>
</dbReference>
<dbReference type="GO" id="GO:0048495">
    <property type="term" value="F:Roundabout binding"/>
    <property type="evidence" value="ECO:0007669"/>
    <property type="project" value="Ensembl"/>
</dbReference>
<dbReference type="GO" id="GO:0003713">
    <property type="term" value="F:transcription coactivator activity"/>
    <property type="evidence" value="ECO:0000250"/>
    <property type="project" value="UniProtKB"/>
</dbReference>
<dbReference type="GO" id="GO:0045165">
    <property type="term" value="P:cell fate commitment"/>
    <property type="evidence" value="ECO:0007669"/>
    <property type="project" value="Ensembl"/>
</dbReference>
<dbReference type="GO" id="GO:0030855">
    <property type="term" value="P:epithelial cell differentiation"/>
    <property type="evidence" value="ECO:0007669"/>
    <property type="project" value="Ensembl"/>
</dbReference>
<dbReference type="GO" id="GO:0045444">
    <property type="term" value="P:fat cell differentiation"/>
    <property type="evidence" value="ECO:0007669"/>
    <property type="project" value="Ensembl"/>
</dbReference>
<dbReference type="GO" id="GO:0016331">
    <property type="term" value="P:morphogenesis of embryonic epithelium"/>
    <property type="evidence" value="ECO:0007669"/>
    <property type="project" value="Ensembl"/>
</dbReference>
<dbReference type="GO" id="GO:0045599">
    <property type="term" value="P:negative regulation of fat cell differentiation"/>
    <property type="evidence" value="ECO:0007669"/>
    <property type="project" value="Ensembl"/>
</dbReference>
<dbReference type="GO" id="GO:0010718">
    <property type="term" value="P:positive regulation of epithelial to mesenchymal transition"/>
    <property type="evidence" value="ECO:0007669"/>
    <property type="project" value="Ensembl"/>
</dbReference>
<dbReference type="GO" id="GO:0030511">
    <property type="term" value="P:positive regulation of transforming growth factor beta receptor signaling pathway"/>
    <property type="evidence" value="ECO:0007669"/>
    <property type="project" value="Ensembl"/>
</dbReference>
<dbReference type="GO" id="GO:2000060">
    <property type="term" value="P:positive regulation of ubiquitin-dependent protein catabolic process"/>
    <property type="evidence" value="ECO:0007669"/>
    <property type="project" value="Ensembl"/>
</dbReference>
<dbReference type="GO" id="GO:0016055">
    <property type="term" value="P:Wnt signaling pathway"/>
    <property type="evidence" value="ECO:0007669"/>
    <property type="project" value="UniProtKB-KW"/>
</dbReference>
<dbReference type="CDD" id="cd09336">
    <property type="entry name" value="LIM1_Paxillin_like"/>
    <property type="match status" value="1"/>
</dbReference>
<dbReference type="CDD" id="cd09337">
    <property type="entry name" value="LIM2_Paxillin_like"/>
    <property type="match status" value="1"/>
</dbReference>
<dbReference type="CDD" id="cd09409">
    <property type="entry name" value="LIM3_Paxillin"/>
    <property type="match status" value="1"/>
</dbReference>
<dbReference type="CDD" id="cd09412">
    <property type="entry name" value="LIM4_Leupaxin"/>
    <property type="match status" value="1"/>
</dbReference>
<dbReference type="FunFam" id="2.10.110.10:FF:000009">
    <property type="entry name" value="Paxillin isoform 1"/>
    <property type="match status" value="1"/>
</dbReference>
<dbReference type="FunFam" id="2.10.110.10:FF:000012">
    <property type="entry name" value="Paxillin isoform 1"/>
    <property type="match status" value="1"/>
</dbReference>
<dbReference type="FunFam" id="2.10.110.10:FF:000018">
    <property type="entry name" value="Paxillin isoform 1"/>
    <property type="match status" value="1"/>
</dbReference>
<dbReference type="FunFam" id="2.10.110.10:FF:000084">
    <property type="entry name" value="transforming growth factor beta-1-induced transcript 1 protein"/>
    <property type="match status" value="1"/>
</dbReference>
<dbReference type="Gene3D" id="2.10.110.10">
    <property type="entry name" value="Cysteine Rich Protein"/>
    <property type="match status" value="4"/>
</dbReference>
<dbReference type="InterPro" id="IPR047075">
    <property type="entry name" value="Paxillin_TGFB1I1_LIM_dom1"/>
</dbReference>
<dbReference type="InterPro" id="IPR017305">
    <property type="entry name" value="Tgfb1i1/Leupaxin/TGFB1I1"/>
</dbReference>
<dbReference type="InterPro" id="IPR001781">
    <property type="entry name" value="Znf_LIM"/>
</dbReference>
<dbReference type="PANTHER" id="PTHR24216">
    <property type="entry name" value="PAXILLIN-RELATED"/>
    <property type="match status" value="1"/>
</dbReference>
<dbReference type="PANTHER" id="PTHR24216:SF27">
    <property type="entry name" value="TRANSFORMING GROWTH FACTOR BETA-1-INDUCED TRANSCRIPT 1 PROTEIN"/>
    <property type="match status" value="1"/>
</dbReference>
<dbReference type="Pfam" id="PF00412">
    <property type="entry name" value="LIM"/>
    <property type="match status" value="4"/>
</dbReference>
<dbReference type="Pfam" id="PF03535">
    <property type="entry name" value="Paxillin"/>
    <property type="match status" value="1"/>
</dbReference>
<dbReference type="PIRSF" id="PIRSF037881">
    <property type="entry name" value="Leupaxin"/>
    <property type="match status" value="1"/>
</dbReference>
<dbReference type="SMART" id="SM00132">
    <property type="entry name" value="LIM"/>
    <property type="match status" value="4"/>
</dbReference>
<dbReference type="SUPFAM" id="SSF57716">
    <property type="entry name" value="Glucocorticoid receptor-like (DNA-binding domain)"/>
    <property type="match status" value="5"/>
</dbReference>
<dbReference type="PROSITE" id="PS00478">
    <property type="entry name" value="LIM_DOMAIN_1"/>
    <property type="match status" value="4"/>
</dbReference>
<dbReference type="PROSITE" id="PS50023">
    <property type="entry name" value="LIM_DOMAIN_2"/>
    <property type="match status" value="4"/>
</dbReference>
<organism>
    <name type="scientific">Bos taurus</name>
    <name type="common">Bovine</name>
    <dbReference type="NCBI Taxonomy" id="9913"/>
    <lineage>
        <taxon>Eukaryota</taxon>
        <taxon>Metazoa</taxon>
        <taxon>Chordata</taxon>
        <taxon>Craniata</taxon>
        <taxon>Vertebrata</taxon>
        <taxon>Euteleostomi</taxon>
        <taxon>Mammalia</taxon>
        <taxon>Eutheria</taxon>
        <taxon>Laurasiatheria</taxon>
        <taxon>Artiodactyla</taxon>
        <taxon>Ruminantia</taxon>
        <taxon>Pecora</taxon>
        <taxon>Bovidae</taxon>
        <taxon>Bovinae</taxon>
        <taxon>Bos</taxon>
    </lineage>
</organism>
<reference key="1">
    <citation type="submission" date="2006-03" db="EMBL/GenBank/DDBJ databases">
        <title>Bovine genome sequencing program: full-length cDNA sequencing.</title>
        <authorList>
            <person name="Moore S."/>
            <person name="Alexander L."/>
            <person name="Brownstein M."/>
            <person name="Guan L."/>
            <person name="Lobo S."/>
            <person name="Meng Y."/>
            <person name="Tanaguchi M."/>
            <person name="Wang Z."/>
            <person name="Yu J."/>
            <person name="Prange C."/>
            <person name="Schreiber K."/>
            <person name="Shenmen C."/>
            <person name="Wagner L."/>
            <person name="Bala M."/>
            <person name="Barbazuk S."/>
            <person name="Barber S."/>
            <person name="Babakaiff R."/>
            <person name="Beland J."/>
            <person name="Chun E."/>
            <person name="Del Rio L."/>
            <person name="Gibson S."/>
            <person name="Hanson R."/>
            <person name="Kirkpatrick R."/>
            <person name="Liu J."/>
            <person name="Matsuo C."/>
            <person name="Mayo M."/>
            <person name="Santos R.R."/>
            <person name="Stott J."/>
            <person name="Tsai M."/>
            <person name="Wong D."/>
            <person name="Siddiqui A."/>
            <person name="Holt R."/>
            <person name="Jones S.J."/>
            <person name="Marra M.A."/>
        </authorList>
    </citation>
    <scope>NUCLEOTIDE SEQUENCE [LARGE SCALE MRNA]</scope>
</reference>
<reference key="2">
    <citation type="submission" date="2005-09" db="EMBL/GenBank/DDBJ databases">
        <authorList>
            <consortium name="NIH - Mammalian Gene Collection (MGC) project"/>
        </authorList>
    </citation>
    <scope>NUCLEOTIDE SEQUENCE [LARGE SCALE MRNA] OF 9-448</scope>
    <source>
        <strain>Hereford</strain>
        <tissue>Fetal ascending colon</tissue>
        <tissue>Uterus</tissue>
    </source>
</reference>
<reference key="3">
    <citation type="journal article" date="2004" name="J. Thromb. Haemost.">
        <title>Extracellular matrix molecules regulate endothelial cell migration stimulated by lysophosphatidic acid.</title>
        <authorList>
            <person name="Panetti T.S."/>
            <person name="Hannah D.F."/>
            <person name="Avraamides C.J."/>
            <person name="Gaughan J.P."/>
            <person name="Marcinkiewicz C."/>
            <person name="Huttenlocher A."/>
            <person name="Mosher D.F."/>
        </authorList>
    </citation>
    <scope>SUBCELLULAR LOCATION</scope>
</reference>
<reference key="4">
    <citation type="journal article" date="2007" name="Am. J. Physiol.">
        <title>Hic-5 promotes endothelial cell migration to lysophosphatidic acid.</title>
        <authorList>
            <person name="Avraamides C.J."/>
            <person name="Bromberg M.E."/>
            <person name="Gaughan J.P."/>
            <person name="Thomas S.M."/>
            <person name="Tsygankov A.Y."/>
            <person name="Panetti T.S."/>
        </authorList>
    </citation>
    <scope>FUNCTION</scope>
    <scope>SUBCELLULAR LOCATION</scope>
</reference>